<gene>
    <name evidence="1" type="primary">rplW</name>
    <name type="ordered locus">BLA_0364</name>
</gene>
<protein>
    <recommendedName>
        <fullName evidence="1">Large ribosomal subunit protein uL23</fullName>
    </recommendedName>
    <alternativeName>
        <fullName evidence="2">50S ribosomal protein L23</fullName>
    </alternativeName>
</protein>
<sequence>MVAIHKPAHDIILKPVVSEKSYALSDMGQYTFVVAPNANKVQIKQAIEEIFKVKVTNVNTLNRAGKRTRTRTGYGRRVNQKRAIVTVAEGQSIDIFGN</sequence>
<proteinExistence type="inferred from homology"/>
<feature type="chain" id="PRO_1000184066" description="Large ribosomal subunit protein uL23">
    <location>
        <begin position="1"/>
        <end position="98"/>
    </location>
</feature>
<reference key="1">
    <citation type="journal article" date="2009" name="J. Bacteriol.">
        <title>Genome sequence of the probiotic bacterium Bifidobacterium animalis subsp. lactis AD011.</title>
        <authorList>
            <person name="Kim J.F."/>
            <person name="Jeong H."/>
            <person name="Yu D.S."/>
            <person name="Choi S.-H."/>
            <person name="Hur C.-G."/>
            <person name="Park M.-S."/>
            <person name="Yoon S.H."/>
            <person name="Kim D.-W."/>
            <person name="Ji G.E."/>
            <person name="Park H.-S."/>
            <person name="Oh T.K."/>
        </authorList>
    </citation>
    <scope>NUCLEOTIDE SEQUENCE [LARGE SCALE GENOMIC DNA]</scope>
    <source>
        <strain>AD011</strain>
    </source>
</reference>
<evidence type="ECO:0000255" key="1">
    <source>
        <dbReference type="HAMAP-Rule" id="MF_01369"/>
    </source>
</evidence>
<evidence type="ECO:0000305" key="2"/>
<accession>B8DW15</accession>
<keyword id="KW-1185">Reference proteome</keyword>
<keyword id="KW-0687">Ribonucleoprotein</keyword>
<keyword id="KW-0689">Ribosomal protein</keyword>
<keyword id="KW-0694">RNA-binding</keyword>
<keyword id="KW-0699">rRNA-binding</keyword>
<dbReference type="EMBL" id="CP001213">
    <property type="protein sequence ID" value="ACL28666.1"/>
    <property type="molecule type" value="Genomic_DNA"/>
</dbReference>
<dbReference type="RefSeq" id="WP_004268576.1">
    <property type="nucleotide sequence ID" value="NC_011835.1"/>
</dbReference>
<dbReference type="SMR" id="B8DW15"/>
<dbReference type="STRING" id="442563.BLA_0364"/>
<dbReference type="GeneID" id="29695369"/>
<dbReference type="KEGG" id="bla:BLA_0364"/>
<dbReference type="HOGENOM" id="CLU_037562_3_2_11"/>
<dbReference type="Proteomes" id="UP000002456">
    <property type="component" value="Chromosome"/>
</dbReference>
<dbReference type="GO" id="GO:1990904">
    <property type="term" value="C:ribonucleoprotein complex"/>
    <property type="evidence" value="ECO:0007669"/>
    <property type="project" value="UniProtKB-KW"/>
</dbReference>
<dbReference type="GO" id="GO:0005840">
    <property type="term" value="C:ribosome"/>
    <property type="evidence" value="ECO:0007669"/>
    <property type="project" value="UniProtKB-KW"/>
</dbReference>
<dbReference type="GO" id="GO:0019843">
    <property type="term" value="F:rRNA binding"/>
    <property type="evidence" value="ECO:0007669"/>
    <property type="project" value="UniProtKB-UniRule"/>
</dbReference>
<dbReference type="GO" id="GO:0003735">
    <property type="term" value="F:structural constituent of ribosome"/>
    <property type="evidence" value="ECO:0007669"/>
    <property type="project" value="InterPro"/>
</dbReference>
<dbReference type="GO" id="GO:0006412">
    <property type="term" value="P:translation"/>
    <property type="evidence" value="ECO:0007669"/>
    <property type="project" value="UniProtKB-UniRule"/>
</dbReference>
<dbReference type="FunFam" id="3.30.70.330:FF:000001">
    <property type="entry name" value="50S ribosomal protein L23"/>
    <property type="match status" value="1"/>
</dbReference>
<dbReference type="Gene3D" id="3.30.70.330">
    <property type="match status" value="1"/>
</dbReference>
<dbReference type="HAMAP" id="MF_01369_B">
    <property type="entry name" value="Ribosomal_uL23_B"/>
    <property type="match status" value="1"/>
</dbReference>
<dbReference type="InterPro" id="IPR012677">
    <property type="entry name" value="Nucleotide-bd_a/b_plait_sf"/>
</dbReference>
<dbReference type="InterPro" id="IPR013025">
    <property type="entry name" value="Ribosomal_uL23-like"/>
</dbReference>
<dbReference type="InterPro" id="IPR012678">
    <property type="entry name" value="Ribosomal_uL23/eL15/eS24_sf"/>
</dbReference>
<dbReference type="NCBIfam" id="NF004359">
    <property type="entry name" value="PRK05738.1-3"/>
    <property type="match status" value="1"/>
</dbReference>
<dbReference type="NCBIfam" id="NF004363">
    <property type="entry name" value="PRK05738.2-4"/>
    <property type="match status" value="1"/>
</dbReference>
<dbReference type="NCBIfam" id="NF004364">
    <property type="entry name" value="PRK05738.2-5"/>
    <property type="match status" value="1"/>
</dbReference>
<dbReference type="PANTHER" id="PTHR11620">
    <property type="entry name" value="60S RIBOSOMAL PROTEIN L23A"/>
    <property type="match status" value="1"/>
</dbReference>
<dbReference type="Pfam" id="PF00276">
    <property type="entry name" value="Ribosomal_L23"/>
    <property type="match status" value="1"/>
</dbReference>
<dbReference type="SUPFAM" id="SSF54189">
    <property type="entry name" value="Ribosomal proteins S24e, L23 and L15e"/>
    <property type="match status" value="1"/>
</dbReference>
<comment type="function">
    <text evidence="1">One of the early assembly proteins it binds 23S rRNA. One of the proteins that surrounds the polypeptide exit tunnel on the outside of the ribosome. Forms the main docking site for trigger factor binding to the ribosome.</text>
</comment>
<comment type="subunit">
    <text evidence="1">Part of the 50S ribosomal subunit. Contacts protein L29, and trigger factor when it is bound to the ribosome.</text>
</comment>
<comment type="similarity">
    <text evidence="1">Belongs to the universal ribosomal protein uL23 family.</text>
</comment>
<organism>
    <name type="scientific">Bifidobacterium animalis subsp. lactis (strain AD011)</name>
    <dbReference type="NCBI Taxonomy" id="442563"/>
    <lineage>
        <taxon>Bacteria</taxon>
        <taxon>Bacillati</taxon>
        <taxon>Actinomycetota</taxon>
        <taxon>Actinomycetes</taxon>
        <taxon>Bifidobacteriales</taxon>
        <taxon>Bifidobacteriaceae</taxon>
        <taxon>Bifidobacterium</taxon>
    </lineage>
</organism>
<name>RL23_BIFA0</name>